<reference key="1">
    <citation type="submission" date="2003-10" db="EMBL/GenBank/DDBJ databases">
        <title>camP, 2,5-diketocamphane 1,2-monooxygenase homolog, and camQ, lactone hydrolase, on the CAM plasmid of Pseudomonas putida NCIMB 10007.</title>
        <authorList>
            <person name="Tongyoo N."/>
            <person name="Ward J.M."/>
        </authorList>
    </citation>
    <scope>NUCLEOTIDE SEQUENCE [GENOMIC DNA]</scope>
    <source>
        <strain>ATCC 17453 / DSM 50198 / JCM 6157 / NCIMB 10007 / NRRL B-4067 / Stanier 77 / Biotype A</strain>
        <plasmid>CAM</plasmid>
    </source>
</reference>
<reference key="2">
    <citation type="journal article" date="2012" name="Appl. Environ. Microbiol.">
        <title>Cloning, Baeyer-Villiger biooxidations, and structures of the camphor pathway 2-oxo-Delta(3)-4,5,5-trimethylcyclopentenylacetyl-coenzyme A monooxygenase of Pseudomonas putida ATCC 17453.</title>
        <authorList>
            <person name="Leisch H."/>
            <person name="Shi R."/>
            <person name="Grosse S."/>
            <person name="Morley K."/>
            <person name="Bergeron H."/>
            <person name="Cygler M."/>
            <person name="Iwaki H."/>
            <person name="Hasegawa Y."/>
            <person name="Lau P.C.K."/>
        </authorList>
    </citation>
    <scope>NUCLEOTIDE SEQUENCE [GENOMIC DNA]</scope>
    <source>
        <strain>ATCC 17453 / DSM 50198 / JCM 6157 / NCIMB 10007 / NRRL B-4067 / Stanier 77 / Biotype A</strain>
        <plasmid>CAM</plasmid>
    </source>
</reference>
<reference key="3">
    <citation type="journal article" date="2013" name="Appl. Environ. Microbiol.">
        <title>Camphor pathway redux: functional recombinant expression of 2,5- and 3,6-diketocamphane monooxygenases of Pseudomonas putida ATCC 17453 with their cognate flavin reductase catalyzing Baeyer-Villiger reactions.</title>
        <authorList>
            <person name="Iwaki H."/>
            <person name="Grosse S."/>
            <person name="Bergeron H."/>
            <person name="Leisch H."/>
            <person name="Morley K."/>
            <person name="Hasegawa Y."/>
            <person name="Lau P.C.K."/>
        </authorList>
    </citation>
    <scope>NUCLEOTIDE SEQUENCE [GENOMIC DNA]</scope>
    <scope>FUNCTION</scope>
    <scope>BVMO ACTIVITY</scope>
    <scope>BIOPHYSICOCHEMICAL PROPERTIES</scope>
    <scope>SUBSTRATE SPECIFICITY</scope>
    <scope>SUBUNIT</scope>
    <source>
        <strain>ATCC 17453 / DSM 50198 / JCM 6157 / NCIMB 10007 / NRRL B-4067 / Stanier 77 / Biotype A</strain>
        <plasmid>CAM</plasmid>
    </source>
</reference>
<reference key="4">
    <citation type="journal article" date="1986" name="J. Bacteriol.">
        <title>Camphor revisited: studies of 2,5-diketocamphane 1,2-monooxygenase from Pseudomonas putida ATCC 17453.</title>
        <authorList>
            <person name="Taylor D.G."/>
            <person name="Trudgill P.W."/>
        </authorList>
    </citation>
    <scope>FUNCTION</scope>
    <scope>CATALYTIC ACTIVITY</scope>
    <scope>SUBUNIT</scope>
    <scope>PATHWAY</scope>
    <source>
        <strain>ATCC 17453 / DSM 50198 / JCM 6157 / NCIMB 10007 / NRRL B-4067 / Stanier 77 / Biotype A</strain>
        <plasmid>CAM</plasmid>
    </source>
</reference>
<reference key="5">
    <citation type="journal article" date="1993" name="J. Gen. Microbiol.">
        <title>Diketocamphane enantiomer-specific 'Baeyer-Villiger' monooxygenases from camphor-grown Pseudomonas putida ATCC 17453.</title>
        <authorList>
            <person name="Jones K.H."/>
            <person name="Smith R.T."/>
            <person name="Trudgill P.W."/>
        </authorList>
    </citation>
    <scope>FUNCTION</scope>
    <scope>BVMO ACTIVITY</scope>
    <scope>SUBUNIT</scope>
    <scope>INDUCTION</scope>
    <scope>PATHWAY</scope>
    <source>
        <strain>ATCC 17453 / DSM 50198 / JCM 6157 / NCIMB 10007 / NRRL B-4067 / Stanier 77 / Biotype A</strain>
        <plasmid>CAM</plasmid>
    </source>
</reference>
<reference key="6">
    <citation type="journal article" date="2011" name="AMB Express">
        <title>Recombinant expression and purification of the 2,5-diketocamphane 1,2-monooxygenase from the camphor metabolizing Pseudomonas putida strain NCIMB 10007.</title>
        <authorList>
            <person name="Kadow M."/>
            <person name="Sass S."/>
            <person name="Schmidt M."/>
            <person name="Bornscheuer U.T."/>
        </authorList>
    </citation>
    <scope>FUNCTION</scope>
    <scope>BVMO ACTIVITY</scope>
    <scope>SUBSTRATE SPECIFICITY</scope>
    <source>
        <strain>ATCC 17453 / DSM 50198 / JCM 6157 / NCIMB 10007 / NRRL B-4067 / Stanier 77 / Biotype A</strain>
        <plasmid>CAM</plasmid>
    </source>
</reference>
<keyword id="KW-0285">Flavoprotein</keyword>
<keyword id="KW-0288">FMN</keyword>
<keyword id="KW-0503">Monooxygenase</keyword>
<keyword id="KW-0560">Oxidoreductase</keyword>
<keyword id="KW-0614">Plasmid</keyword>
<geneLocation type="plasmid">
    <name>CAM</name>
</geneLocation>
<proteinExistence type="evidence at protein level"/>
<organism>
    <name type="scientific">Pseudomonas putida</name>
    <name type="common">Arthrobacter siderocapsulatus</name>
    <dbReference type="NCBI Taxonomy" id="303"/>
    <lineage>
        <taxon>Bacteria</taxon>
        <taxon>Pseudomonadati</taxon>
        <taxon>Pseudomonadota</taxon>
        <taxon>Gammaproteobacteria</taxon>
        <taxon>Pseudomonadales</taxon>
        <taxon>Pseudomonadaceae</taxon>
        <taxon>Pseudomonas</taxon>
    </lineage>
</organism>
<name>25DK1_PSEPU</name>
<dbReference type="EC" id="1.14.14.108" evidence="4"/>
<dbReference type="EMBL" id="AY450285">
    <property type="protein sequence ID" value="AAR21560.1"/>
    <property type="molecule type" value="Genomic_DNA"/>
</dbReference>
<dbReference type="EMBL" id="AB771747">
    <property type="protein sequence ID" value="BAN13281.1"/>
    <property type="molecule type" value="Genomic_DNA"/>
</dbReference>
<dbReference type="SMR" id="Q6STM1"/>
<dbReference type="KEGG" id="ag:AAR21560"/>
<dbReference type="BioCyc" id="MetaCyc:MONOMER-3524"/>
<dbReference type="BRENDA" id="1.14.14.108">
    <property type="organism ID" value="5092"/>
</dbReference>
<dbReference type="UniPathway" id="UPA00719"/>
<dbReference type="GO" id="GO:0005829">
    <property type="term" value="C:cytosol"/>
    <property type="evidence" value="ECO:0007669"/>
    <property type="project" value="TreeGrafter"/>
</dbReference>
<dbReference type="GO" id="GO:0018684">
    <property type="term" value="F:2,5-diketocamphane 1,2-monooxygenase"/>
    <property type="evidence" value="ECO:0007669"/>
    <property type="project" value="UniProtKB-EC"/>
</dbReference>
<dbReference type="GO" id="GO:0019383">
    <property type="term" value="P:(+)-camphor catabolic process"/>
    <property type="evidence" value="ECO:0007669"/>
    <property type="project" value="UniProtKB-UniPathway"/>
</dbReference>
<dbReference type="Gene3D" id="3.20.20.30">
    <property type="entry name" value="Luciferase-like domain"/>
    <property type="match status" value="1"/>
</dbReference>
<dbReference type="InterPro" id="IPR050766">
    <property type="entry name" value="Bact_Lucif_Oxidored"/>
</dbReference>
<dbReference type="InterPro" id="IPR011251">
    <property type="entry name" value="Luciferase-like_dom"/>
</dbReference>
<dbReference type="InterPro" id="IPR036661">
    <property type="entry name" value="Luciferase-like_sf"/>
</dbReference>
<dbReference type="PANTHER" id="PTHR30137:SF16">
    <property type="entry name" value="BLL0895 PROTEIN"/>
    <property type="match status" value="1"/>
</dbReference>
<dbReference type="PANTHER" id="PTHR30137">
    <property type="entry name" value="LUCIFERASE-LIKE MONOOXYGENASE"/>
    <property type="match status" value="1"/>
</dbReference>
<dbReference type="Pfam" id="PF00296">
    <property type="entry name" value="Bac_luciferase"/>
    <property type="match status" value="1"/>
</dbReference>
<dbReference type="SUPFAM" id="SSF51679">
    <property type="entry name" value="Bacterial luciferase-like"/>
    <property type="match status" value="1"/>
</dbReference>
<protein>
    <recommendedName>
        <fullName evidence="6 8">2,5-diketocamphane 1,2-monooxygenase 1</fullName>
        <shortName evidence="6 7">2,5-DKCMO 1</shortName>
        <shortName evidence="7">2,5-diketocamphane monooxygenase 1</shortName>
        <ecNumber evidence="4">1.14.14.108</ecNumber>
    </recommendedName>
    <alternativeName>
        <fullName evidence="8 9">2,5-diketocamphane 1,2-monooxygenase oxygenating component</fullName>
    </alternativeName>
    <alternativeName>
        <fullName evidence="6">2,5-diketocamphane 1,2-monooxygenase oxygenating subunit</fullName>
    </alternativeName>
    <alternativeName>
        <fullName>Camphor 1,2-monooxygenase</fullName>
    </alternativeName>
    <alternativeName>
        <fullName evidence="6">Type II Baeyer-Villiger monooxygenase</fullName>
        <shortName evidence="6">Type II BVMO</shortName>
    </alternativeName>
</protein>
<gene>
    <name evidence="10" type="primary">camP</name>
    <name evidence="7 14" type="synonym">camE25-1</name>
</gene>
<accession>Q6STM1</accession>
<accession>M5B4L6</accession>
<comment type="function">
    <text evidence="2 3 4 5 12 13">Involved in the degradation and assimilation of (+)-camphor, which allows P.putida strain NCIMB 10007 to grow on this enantiomer of camphor as the sole carbon source (PubMed:3944058, PubMed:8515237). Catalyzes the FMNH(2)-dependent lactonization of 2,5-diketocamphane via a Baeyer-Villiger oxidation to produce the unstable lactone 5-oxo-1,2-campholide with (R,R) configuration, that presumably undergoes spontaneous hydrolysis to form 2-oxo-Delta(3)-4,5,5-trimethylcyclopentenylacetate (PubMed:3944058). Is also able to convert (+)-camphor and norcamphor to the corresponding lactone in vitro (PubMed:21906366, PubMed:23524667, PubMed:8515237). Shows no conversion of (-)-camphor, (+)-fenchone, (-)-fenchone, and (+)-nopinone (PubMed:23524667). Acts only on bicyclic ketones; is not active towards monocyclic ketones, aromatic ketones, the aliphatic 2-decanone, 1-indanone and progesterone (PubMed:21906366).</text>
</comment>
<comment type="catalytic activity">
    <reaction evidence="4">
        <text>(1R,4R)-bornane-2,5-dione + FMNH2 + O2 = (1R,4R)-5-oxo-1,2-campholide + FMN + H2O + H(+)</text>
        <dbReference type="Rhea" id="RHEA:34415"/>
        <dbReference type="ChEBI" id="CHEBI:15377"/>
        <dbReference type="ChEBI" id="CHEBI:15378"/>
        <dbReference type="ChEBI" id="CHEBI:15379"/>
        <dbReference type="ChEBI" id="CHEBI:15392"/>
        <dbReference type="ChEBI" id="CHEBI:18130"/>
        <dbReference type="ChEBI" id="CHEBI:57618"/>
        <dbReference type="ChEBI" id="CHEBI:58210"/>
        <dbReference type="EC" id="1.14.14.108"/>
    </reaction>
</comment>
<comment type="biophysicochemical properties">
    <phDependence>
        <text evidence="3">Optimum pH is 7.5.</text>
    </phDependence>
</comment>
<comment type="pathway">
    <text evidence="12 13">Terpene metabolism; (R)-camphor degradation.</text>
</comment>
<comment type="subunit">
    <text evidence="3 4 5">Homodimer (PubMed:23524667, PubMed:3944058, PubMed:8515237). Likely forms a loose transient complex with a P.putida flavin reductase that provides the required FMNH(2) to the enzyme (PubMed:23524667, PubMed:3944058, PubMed:8515237).</text>
</comment>
<comment type="induction">
    <text evidence="5">By both (-)-camphor and (+)-camphor enantiomers.</text>
</comment>
<comment type="similarity">
    <text evidence="11">Belongs to the bacterial luciferase oxidoreductase family.</text>
</comment>
<feature type="chain" id="PRO_0000422221" description="2,5-diketocamphane 1,2-monooxygenase 1">
    <location>
        <begin position="1"/>
        <end position="363"/>
    </location>
</feature>
<feature type="binding site" evidence="1">
    <location>
        <position position="74"/>
    </location>
    <ligand>
        <name>FMN</name>
        <dbReference type="ChEBI" id="CHEBI:58210"/>
    </ligand>
</feature>
<feature type="binding site" evidence="1">
    <location>
        <begin position="186"/>
        <end position="194"/>
    </location>
    <ligand>
        <name>FMN</name>
        <dbReference type="ChEBI" id="CHEBI:58210"/>
    </ligand>
</feature>
<evidence type="ECO:0000250" key="1">
    <source>
        <dbReference type="UniProtKB" id="D7UER1"/>
    </source>
</evidence>
<evidence type="ECO:0000269" key="2">
    <source>
    </source>
</evidence>
<evidence type="ECO:0000269" key="3">
    <source>
    </source>
</evidence>
<evidence type="ECO:0000269" key="4">
    <source>
    </source>
</evidence>
<evidence type="ECO:0000269" key="5">
    <source>
    </source>
</evidence>
<evidence type="ECO:0000303" key="6">
    <source>
    </source>
</evidence>
<evidence type="ECO:0000303" key="7">
    <source>
    </source>
</evidence>
<evidence type="ECO:0000303" key="8">
    <source>
    </source>
</evidence>
<evidence type="ECO:0000303" key="9">
    <source>
    </source>
</evidence>
<evidence type="ECO:0000303" key="10">
    <source ref="1"/>
</evidence>
<evidence type="ECO:0000305" key="11"/>
<evidence type="ECO:0000305" key="12">
    <source>
    </source>
</evidence>
<evidence type="ECO:0000305" key="13">
    <source>
    </source>
</evidence>
<evidence type="ECO:0000312" key="14">
    <source>
        <dbReference type="EMBL" id="BAN13281.1"/>
    </source>
</evidence>
<sequence length="363" mass="40704">MKCGFFHTPYNLPTRTARQMFDWSLKLAQVCDEAGFADFMIGEHSTLAWENIPCPEIIIGAAAPLTKNIRFAPMAHLLPYHNPATLAIQIGWLSQILEGRYFLGVAPGGHHTDAILHGFEGIGPLQEQMFESLELMEKIWAREPFMEKGKFFQAGFPGPDTMPEYDVEIADNSPWGGRESMEVAVTGLTKNSSSLKWAGERNYSPISFFGGHEVMRSHYDTWAAAMQSKGFTPERSRFRVTRDIFIADTDAEAKKRAKASGLGKSWEHYLFPIYKKFNLFPGIIADAGLDIDPSQVDMDFLAEHVWLCGSPETVKGKIERMMERSGGCGQIVVCSHDNIDNPEPYFESLQRLASEVLPKVRMG</sequence>